<name>XDH_RAT</name>
<gene>
    <name type="primary">Xdh</name>
</gene>
<comment type="function">
    <text evidence="6">Key enzyme in purine degradation. Catalyzes the oxidation of hypoxanthine to xanthine. Catalyzes the oxidation of xanthine to uric acid. Contributes to the generation of reactive oxygen species.</text>
</comment>
<comment type="catalytic activity">
    <reaction evidence="5 6">
        <text>xanthine + NAD(+) + H2O = urate + NADH + H(+)</text>
        <dbReference type="Rhea" id="RHEA:16669"/>
        <dbReference type="ChEBI" id="CHEBI:15377"/>
        <dbReference type="ChEBI" id="CHEBI:15378"/>
        <dbReference type="ChEBI" id="CHEBI:17712"/>
        <dbReference type="ChEBI" id="CHEBI:17775"/>
        <dbReference type="ChEBI" id="CHEBI:57540"/>
        <dbReference type="ChEBI" id="CHEBI:57945"/>
        <dbReference type="EC" id="1.17.1.4"/>
    </reaction>
</comment>
<comment type="catalytic activity">
    <reaction evidence="5 6">
        <text>hypoxanthine + NAD(+) + H2O = xanthine + NADH + H(+)</text>
        <dbReference type="Rhea" id="RHEA:24670"/>
        <dbReference type="ChEBI" id="CHEBI:15377"/>
        <dbReference type="ChEBI" id="CHEBI:15378"/>
        <dbReference type="ChEBI" id="CHEBI:17368"/>
        <dbReference type="ChEBI" id="CHEBI:17712"/>
        <dbReference type="ChEBI" id="CHEBI:57540"/>
        <dbReference type="ChEBI" id="CHEBI:57945"/>
        <dbReference type="EC" id="1.17.1.4"/>
    </reaction>
</comment>
<comment type="catalytic activity">
    <reaction evidence="5 6">
        <text>xanthine + O2 + H2O = urate + H2O2</text>
        <dbReference type="Rhea" id="RHEA:21132"/>
        <dbReference type="ChEBI" id="CHEBI:15377"/>
        <dbReference type="ChEBI" id="CHEBI:15379"/>
        <dbReference type="ChEBI" id="CHEBI:16240"/>
        <dbReference type="ChEBI" id="CHEBI:17712"/>
        <dbReference type="ChEBI" id="CHEBI:17775"/>
        <dbReference type="EC" id="1.17.3.2"/>
    </reaction>
</comment>
<comment type="cofactor">
    <cofactor evidence="6">
        <name>[2Fe-2S] cluster</name>
        <dbReference type="ChEBI" id="CHEBI:190135"/>
    </cofactor>
    <text evidence="6">Binds 2 [2Fe-2S] clusters per subunit.</text>
</comment>
<comment type="cofactor">
    <cofactor evidence="6">
        <name>FAD</name>
        <dbReference type="ChEBI" id="CHEBI:57692"/>
    </cofactor>
</comment>
<comment type="cofactor">
    <cofactor evidence="1">
        <name>Mo-molybdopterin</name>
        <dbReference type="ChEBI" id="CHEBI:71302"/>
    </cofactor>
    <text evidence="1">Binds 1 Mo-molybdopterin (Mo-MPT) cofactor per subunit.</text>
</comment>
<comment type="activity regulation">
    <text evidence="5 7">Can be converted from the dehydrogenase form (D) to the oxidase form (O) irreversibly by proteolysis or reversibly through the oxidation of sulfhydryl groups.</text>
</comment>
<comment type="subunit">
    <text evidence="1">Homodimer. Interacts with BTN1A1 (By similarity).</text>
</comment>
<comment type="subcellular location">
    <subcellularLocation>
        <location evidence="4">Peroxisome</location>
    </subcellularLocation>
    <subcellularLocation>
        <location evidence="4">Cytoplasm</location>
    </subcellularLocation>
    <subcellularLocation>
        <location evidence="1">Secreted</location>
    </subcellularLocation>
</comment>
<comment type="induction">
    <text>By interferon.</text>
</comment>
<comment type="PTM">
    <text>Subject to partial proteolysis; this alters the enzyme from the dehydrogenase form (D) to the oxidase form (O).</text>
</comment>
<comment type="PTM">
    <text>Contains sulfhydryl groups that are easily oxidized (in vitro); this alters the enzyme from the dehydrogenase form (D) to the oxidase form (O).</text>
</comment>
<comment type="similarity">
    <text evidence="8">Belongs to the xanthine dehydrogenase family.</text>
</comment>
<dbReference type="EC" id="1.17.1.4" evidence="5 6"/>
<dbReference type="EC" id="1.17.3.2" evidence="5 6"/>
<dbReference type="EMBL" id="J05579">
    <property type="protein sequence ID" value="AAA42349.1"/>
    <property type="molecule type" value="mRNA"/>
</dbReference>
<dbReference type="EMBL" id="AH000836">
    <property type="protein sequence ID" value="AAA18869.1"/>
    <property type="molecule type" value="Unassigned_DNA"/>
</dbReference>
<dbReference type="RefSeq" id="NP_058850.1">
    <property type="nucleotide sequence ID" value="NM_017154.1"/>
</dbReference>
<dbReference type="PDB" id="1WYG">
    <property type="method" value="X-ray"/>
    <property type="resolution" value="2.60 A"/>
    <property type="chains" value="A=1-1331"/>
</dbReference>
<dbReference type="PDB" id="2E3T">
    <property type="method" value="X-ray"/>
    <property type="resolution" value="2.28 A"/>
    <property type="chains" value="A/B=1-1331"/>
</dbReference>
<dbReference type="PDB" id="3AN1">
    <property type="method" value="X-ray"/>
    <property type="resolution" value="1.73 A"/>
    <property type="chains" value="A/B=1-1331"/>
</dbReference>
<dbReference type="PDB" id="4YRW">
    <property type="method" value="X-ray"/>
    <property type="resolution" value="1.99 A"/>
    <property type="chains" value="A/B=1-1315"/>
</dbReference>
<dbReference type="PDB" id="4YSW">
    <property type="method" value="X-ray"/>
    <property type="resolution" value="1.99 A"/>
    <property type="chains" value="A/B=1-1315"/>
</dbReference>
<dbReference type="PDB" id="4YTY">
    <property type="method" value="X-ray"/>
    <property type="resolution" value="2.20 A"/>
    <property type="chains" value="A/B=1-1331"/>
</dbReference>
<dbReference type="PDB" id="4YTZ">
    <property type="method" value="X-ray"/>
    <property type="resolution" value="2.30 A"/>
    <property type="chains" value="A/B=1-1315"/>
</dbReference>
<dbReference type="PDB" id="6A7X">
    <property type="method" value="X-ray"/>
    <property type="resolution" value="2.15 A"/>
    <property type="chains" value="A/B=1-1331"/>
</dbReference>
<dbReference type="PDB" id="6ABU">
    <property type="method" value="X-ray"/>
    <property type="resolution" value="1.77 A"/>
    <property type="chains" value="A/B=1-1331"/>
</dbReference>
<dbReference type="PDB" id="6AC1">
    <property type="method" value="X-ray"/>
    <property type="resolution" value="1.77 A"/>
    <property type="chains" value="A/B=1-1331"/>
</dbReference>
<dbReference type="PDB" id="6AC4">
    <property type="method" value="X-ray"/>
    <property type="resolution" value="2.19 A"/>
    <property type="chains" value="A/B=1-1331"/>
</dbReference>
<dbReference type="PDB" id="6AD4">
    <property type="method" value="X-ray"/>
    <property type="resolution" value="1.80 A"/>
    <property type="chains" value="A/B=1-1331"/>
</dbReference>
<dbReference type="PDB" id="6ADJ">
    <property type="method" value="X-ray"/>
    <property type="resolution" value="2.18 A"/>
    <property type="chains" value="A/B=1-1331"/>
</dbReference>
<dbReference type="PDB" id="6AJU">
    <property type="method" value="X-ray"/>
    <property type="resolution" value="1.94 A"/>
    <property type="chains" value="A/F=1-1331"/>
</dbReference>
<dbReference type="PDBsum" id="1WYG"/>
<dbReference type="PDBsum" id="2E3T"/>
<dbReference type="PDBsum" id="3AN1"/>
<dbReference type="PDBsum" id="4YRW"/>
<dbReference type="PDBsum" id="4YSW"/>
<dbReference type="PDBsum" id="4YTY"/>
<dbReference type="PDBsum" id="4YTZ"/>
<dbReference type="PDBsum" id="6A7X"/>
<dbReference type="PDBsum" id="6ABU"/>
<dbReference type="PDBsum" id="6AC1"/>
<dbReference type="PDBsum" id="6AC4"/>
<dbReference type="PDBsum" id="6AD4"/>
<dbReference type="PDBsum" id="6ADJ"/>
<dbReference type="PDBsum" id="6AJU"/>
<dbReference type="SMR" id="P22985"/>
<dbReference type="FunCoup" id="P22985">
    <property type="interactions" value="354"/>
</dbReference>
<dbReference type="STRING" id="10116.ENSRNOP00000009634"/>
<dbReference type="BindingDB" id="P22985"/>
<dbReference type="ChEMBL" id="CHEMBL1075246"/>
<dbReference type="DrugCentral" id="P22985"/>
<dbReference type="iPTMnet" id="P22985"/>
<dbReference type="PhosphoSitePlus" id="P22985"/>
<dbReference type="PaxDb" id="10116-ENSRNOP00000009634"/>
<dbReference type="GeneID" id="497811"/>
<dbReference type="KEGG" id="rno:497811"/>
<dbReference type="UCSC" id="RGD:62043">
    <property type="organism name" value="rat"/>
</dbReference>
<dbReference type="AGR" id="RGD:62043"/>
<dbReference type="CTD" id="7498"/>
<dbReference type="RGD" id="62043">
    <property type="gene designation" value="Xdh"/>
</dbReference>
<dbReference type="eggNOG" id="KOG0430">
    <property type="taxonomic scope" value="Eukaryota"/>
</dbReference>
<dbReference type="InParanoid" id="P22985"/>
<dbReference type="PhylomeDB" id="P22985"/>
<dbReference type="BioCyc" id="MetaCyc:MONOMER-15163"/>
<dbReference type="BRENDA" id="1.17.1.4">
    <property type="organism ID" value="5301"/>
</dbReference>
<dbReference type="BRENDA" id="1.17.3.2">
    <property type="organism ID" value="5301"/>
</dbReference>
<dbReference type="Reactome" id="R-RNO-74259">
    <property type="pathway name" value="Purine catabolism"/>
</dbReference>
<dbReference type="Reactome" id="R-RNO-8851680">
    <property type="pathway name" value="Butyrophilin (BTN) family interactions"/>
</dbReference>
<dbReference type="Reactome" id="R-RNO-9748787">
    <property type="pathway name" value="Azathioprine ADME"/>
</dbReference>
<dbReference type="SABIO-RK" id="P22985"/>
<dbReference type="EvolutionaryTrace" id="P22985"/>
<dbReference type="PRO" id="PR:P22985"/>
<dbReference type="Proteomes" id="UP000002494">
    <property type="component" value="Unplaced"/>
</dbReference>
<dbReference type="GO" id="GO:0005829">
    <property type="term" value="C:cytosol"/>
    <property type="evidence" value="ECO:0000314"/>
    <property type="project" value="MGI"/>
</dbReference>
<dbReference type="GO" id="GO:0005615">
    <property type="term" value="C:extracellular space"/>
    <property type="evidence" value="ECO:0000314"/>
    <property type="project" value="RGD"/>
</dbReference>
<dbReference type="GO" id="GO:0005777">
    <property type="term" value="C:peroxisome"/>
    <property type="evidence" value="ECO:0000314"/>
    <property type="project" value="MGI"/>
</dbReference>
<dbReference type="GO" id="GO:0016529">
    <property type="term" value="C:sarcoplasmic reticulum"/>
    <property type="evidence" value="ECO:0000266"/>
    <property type="project" value="RGD"/>
</dbReference>
<dbReference type="GO" id="GO:0051537">
    <property type="term" value="F:2 iron, 2 sulfur cluster binding"/>
    <property type="evidence" value="ECO:0000314"/>
    <property type="project" value="UniProtKB"/>
</dbReference>
<dbReference type="GO" id="GO:0071949">
    <property type="term" value="F:FAD binding"/>
    <property type="evidence" value="ECO:0007669"/>
    <property type="project" value="InterPro"/>
</dbReference>
<dbReference type="GO" id="GO:0050660">
    <property type="term" value="F:flavin adenine dinucleotide binding"/>
    <property type="evidence" value="ECO:0000314"/>
    <property type="project" value="UniProtKB"/>
</dbReference>
<dbReference type="GO" id="GO:0070674">
    <property type="term" value="F:hypoxanthine dehydrogenase activity"/>
    <property type="evidence" value="ECO:0000266"/>
    <property type="project" value="RGD"/>
</dbReference>
<dbReference type="GO" id="GO:0070675">
    <property type="term" value="F:hypoxanthine oxidase activity"/>
    <property type="evidence" value="ECO:0000266"/>
    <property type="project" value="RGD"/>
</dbReference>
<dbReference type="GO" id="GO:0042802">
    <property type="term" value="F:identical protein binding"/>
    <property type="evidence" value="ECO:0000353"/>
    <property type="project" value="RGD"/>
</dbReference>
<dbReference type="GO" id="GO:0005506">
    <property type="term" value="F:iron ion binding"/>
    <property type="evidence" value="ECO:0007669"/>
    <property type="project" value="InterPro"/>
</dbReference>
<dbReference type="GO" id="GO:0043546">
    <property type="term" value="F:molybdopterin cofactor binding"/>
    <property type="evidence" value="ECO:0000314"/>
    <property type="project" value="UniProtKB"/>
</dbReference>
<dbReference type="GO" id="GO:0050421">
    <property type="term" value="F:nitrite reductase (NO-forming) activity"/>
    <property type="evidence" value="ECO:0000314"/>
    <property type="project" value="RGD"/>
</dbReference>
<dbReference type="GO" id="GO:0016491">
    <property type="term" value="F:oxidoreductase activity"/>
    <property type="evidence" value="ECO:0000266"/>
    <property type="project" value="RGD"/>
</dbReference>
<dbReference type="GO" id="GO:0042803">
    <property type="term" value="F:protein homodimerization activity"/>
    <property type="evidence" value="ECO:0000266"/>
    <property type="project" value="RGD"/>
</dbReference>
<dbReference type="GO" id="GO:0004854">
    <property type="term" value="F:xanthine dehydrogenase activity"/>
    <property type="evidence" value="ECO:0000314"/>
    <property type="project" value="UniProtKB"/>
</dbReference>
<dbReference type="GO" id="GO:0004855">
    <property type="term" value="F:xanthine oxidase activity"/>
    <property type="evidence" value="ECO:0000314"/>
    <property type="project" value="UniProtKB"/>
</dbReference>
<dbReference type="GO" id="GO:0006154">
    <property type="term" value="P:adenosine catabolic process"/>
    <property type="evidence" value="ECO:0000314"/>
    <property type="project" value="MGI"/>
</dbReference>
<dbReference type="GO" id="GO:0000255">
    <property type="term" value="P:allantoin metabolic process"/>
    <property type="evidence" value="ECO:0000314"/>
    <property type="project" value="MGI"/>
</dbReference>
<dbReference type="GO" id="GO:0043605">
    <property type="term" value="P:amide catabolic process"/>
    <property type="evidence" value="ECO:0000266"/>
    <property type="project" value="RGD"/>
</dbReference>
<dbReference type="GO" id="GO:0006196">
    <property type="term" value="P:AMP catabolic process"/>
    <property type="evidence" value="ECO:0000266"/>
    <property type="project" value="RGD"/>
</dbReference>
<dbReference type="GO" id="GO:0071347">
    <property type="term" value="P:cellular response to interleukin-1"/>
    <property type="evidence" value="ECO:0000270"/>
    <property type="project" value="RGD"/>
</dbReference>
<dbReference type="GO" id="GO:0071356">
    <property type="term" value="P:cellular response to tumor necrosis factor"/>
    <property type="evidence" value="ECO:0000270"/>
    <property type="project" value="RGD"/>
</dbReference>
<dbReference type="GO" id="GO:0046059">
    <property type="term" value="P:dAMP catabolic process"/>
    <property type="evidence" value="ECO:0000266"/>
    <property type="project" value="RGD"/>
</dbReference>
<dbReference type="GO" id="GO:0006157">
    <property type="term" value="P:deoxyadenosine catabolic process"/>
    <property type="evidence" value="ECO:0000266"/>
    <property type="project" value="RGD"/>
</dbReference>
<dbReference type="GO" id="GO:0006161">
    <property type="term" value="P:deoxyguanosine catabolic process"/>
    <property type="evidence" value="ECO:0000266"/>
    <property type="project" value="RGD"/>
</dbReference>
<dbReference type="GO" id="GO:0006149">
    <property type="term" value="P:deoxyinosine catabolic process"/>
    <property type="evidence" value="ECO:0000266"/>
    <property type="project" value="RGD"/>
</dbReference>
<dbReference type="GO" id="GO:0046055">
    <property type="term" value="P:dGMP catabolic process"/>
    <property type="evidence" value="ECO:0000266"/>
    <property type="project" value="RGD"/>
</dbReference>
<dbReference type="GO" id="GO:0046038">
    <property type="term" value="P:GMP catabolic process"/>
    <property type="evidence" value="ECO:0000266"/>
    <property type="project" value="RGD"/>
</dbReference>
<dbReference type="GO" id="GO:0006147">
    <property type="term" value="P:guanine catabolic process"/>
    <property type="evidence" value="ECO:0000314"/>
    <property type="project" value="MGI"/>
</dbReference>
<dbReference type="GO" id="GO:0009114">
    <property type="term" value="P:hypoxanthine catabolic process"/>
    <property type="evidence" value="ECO:0000314"/>
    <property type="project" value="MGI"/>
</dbReference>
<dbReference type="GO" id="GO:0006204">
    <property type="term" value="P:IMP catabolic process"/>
    <property type="evidence" value="ECO:0000266"/>
    <property type="project" value="RGD"/>
</dbReference>
<dbReference type="GO" id="GO:0006148">
    <property type="term" value="P:inosine catabolic process"/>
    <property type="evidence" value="ECO:0000314"/>
    <property type="project" value="MGI"/>
</dbReference>
<dbReference type="GO" id="GO:0016226">
    <property type="term" value="P:iron-sulfur cluster assembly"/>
    <property type="evidence" value="ECO:0000266"/>
    <property type="project" value="RGD"/>
</dbReference>
<dbReference type="GO" id="GO:0007595">
    <property type="term" value="P:lactation"/>
    <property type="evidence" value="ECO:0000266"/>
    <property type="project" value="RGD"/>
</dbReference>
<dbReference type="GO" id="GO:0030856">
    <property type="term" value="P:regulation of epithelial cell differentiation"/>
    <property type="evidence" value="ECO:0000266"/>
    <property type="project" value="RGD"/>
</dbReference>
<dbReference type="GO" id="GO:0010044">
    <property type="term" value="P:response to aluminum ion"/>
    <property type="evidence" value="ECO:0000314"/>
    <property type="project" value="RGD"/>
</dbReference>
<dbReference type="GO" id="GO:0097184">
    <property type="term" value="P:response to azide"/>
    <property type="evidence" value="ECO:0000270"/>
    <property type="project" value="RGD"/>
</dbReference>
<dbReference type="GO" id="GO:0034465">
    <property type="term" value="P:response to carbon monoxide"/>
    <property type="evidence" value="ECO:0000270"/>
    <property type="project" value="RGD"/>
</dbReference>
<dbReference type="GO" id="GO:0042542">
    <property type="term" value="P:response to hydrogen peroxide"/>
    <property type="evidence" value="ECO:0000270"/>
    <property type="project" value="RGD"/>
</dbReference>
<dbReference type="GO" id="GO:0032496">
    <property type="term" value="P:response to lipopolysaccharide"/>
    <property type="evidence" value="ECO:0000270"/>
    <property type="project" value="RGD"/>
</dbReference>
<dbReference type="GO" id="GO:0009115">
    <property type="term" value="P:xanthine catabolic process"/>
    <property type="evidence" value="ECO:0000314"/>
    <property type="project" value="UniProtKB"/>
</dbReference>
<dbReference type="FunFam" id="3.10.20.30:FF:000015">
    <property type="entry name" value="Aldehyde oxidase 1"/>
    <property type="match status" value="1"/>
</dbReference>
<dbReference type="FunFam" id="3.30.365.10:FF:000003">
    <property type="entry name" value="Aldehyde oxidase 1"/>
    <property type="match status" value="1"/>
</dbReference>
<dbReference type="FunFam" id="3.30.365.10:FF:000001">
    <property type="entry name" value="Xanthine dehydrogenase oxidase"/>
    <property type="match status" value="1"/>
</dbReference>
<dbReference type="FunFam" id="3.30.365.10:FF:000002">
    <property type="entry name" value="Xanthine dehydrogenase oxidase"/>
    <property type="match status" value="1"/>
</dbReference>
<dbReference type="FunFam" id="3.30.365.10:FF:000004">
    <property type="entry name" value="Xanthine dehydrogenase oxidase"/>
    <property type="match status" value="1"/>
</dbReference>
<dbReference type="FunFam" id="3.30.390.50:FF:000001">
    <property type="entry name" value="Xanthine dehydrogenase oxidase"/>
    <property type="match status" value="1"/>
</dbReference>
<dbReference type="FunFam" id="3.30.43.10:FF:000001">
    <property type="entry name" value="Xanthine dehydrogenase/oxidase"/>
    <property type="match status" value="1"/>
</dbReference>
<dbReference type="FunFam" id="3.30.465.10:FF:000004">
    <property type="entry name" value="Xanthine dehydrogenase/oxidase"/>
    <property type="match status" value="1"/>
</dbReference>
<dbReference type="FunFam" id="3.90.1170.50:FF:000002">
    <property type="entry name" value="Xanthine dehydrogenase/oxidase"/>
    <property type="match status" value="1"/>
</dbReference>
<dbReference type="FunFam" id="1.10.150.120:FF:000002">
    <property type="entry name" value="xanthine dehydrogenase/oxidase"/>
    <property type="match status" value="1"/>
</dbReference>
<dbReference type="FunFam" id="3.30.365.10:FF:000006">
    <property type="entry name" value="xanthine dehydrogenase/oxidase"/>
    <property type="match status" value="1"/>
</dbReference>
<dbReference type="Gene3D" id="3.10.20.30">
    <property type="match status" value="1"/>
</dbReference>
<dbReference type="Gene3D" id="3.30.465.10">
    <property type="match status" value="1"/>
</dbReference>
<dbReference type="Gene3D" id="1.10.150.120">
    <property type="entry name" value="[2Fe-2S]-binding domain"/>
    <property type="match status" value="1"/>
</dbReference>
<dbReference type="Gene3D" id="3.90.1170.50">
    <property type="entry name" value="Aldehyde oxidase/xanthine dehydrogenase, a/b hammerhead"/>
    <property type="match status" value="1"/>
</dbReference>
<dbReference type="Gene3D" id="3.30.365.10">
    <property type="entry name" value="Aldehyde oxidase/xanthine dehydrogenase, molybdopterin binding domain"/>
    <property type="match status" value="5"/>
</dbReference>
<dbReference type="Gene3D" id="3.30.390.50">
    <property type="entry name" value="CO dehydrogenase flavoprotein, C-terminal domain"/>
    <property type="match status" value="1"/>
</dbReference>
<dbReference type="Gene3D" id="3.30.43.10">
    <property type="entry name" value="Uridine Diphospho-n-acetylenolpyruvylglucosamine Reductase, domain 2"/>
    <property type="match status" value="1"/>
</dbReference>
<dbReference type="InterPro" id="IPR002888">
    <property type="entry name" value="2Fe-2S-bd"/>
</dbReference>
<dbReference type="InterPro" id="IPR036884">
    <property type="entry name" value="2Fe-2S-bd_dom_sf"/>
</dbReference>
<dbReference type="InterPro" id="IPR036010">
    <property type="entry name" value="2Fe-2S_ferredoxin-like_sf"/>
</dbReference>
<dbReference type="InterPro" id="IPR001041">
    <property type="entry name" value="2Fe-2S_ferredoxin-type"/>
</dbReference>
<dbReference type="InterPro" id="IPR006058">
    <property type="entry name" value="2Fe2S_fd_BS"/>
</dbReference>
<dbReference type="InterPro" id="IPR000674">
    <property type="entry name" value="Ald_Oxase/Xan_DH_a/b"/>
</dbReference>
<dbReference type="InterPro" id="IPR036856">
    <property type="entry name" value="Ald_Oxase/Xan_DH_a/b_sf"/>
</dbReference>
<dbReference type="InterPro" id="IPR016208">
    <property type="entry name" value="Ald_Oxase/xanthine_DH-like"/>
</dbReference>
<dbReference type="InterPro" id="IPR008274">
    <property type="entry name" value="AldOxase/xan_DH_MoCoBD1"/>
</dbReference>
<dbReference type="InterPro" id="IPR046867">
    <property type="entry name" value="AldOxase/xan_DH_MoCoBD2"/>
</dbReference>
<dbReference type="InterPro" id="IPR037165">
    <property type="entry name" value="AldOxase/xan_DH_Mopterin-bd_sf"/>
</dbReference>
<dbReference type="InterPro" id="IPR012675">
    <property type="entry name" value="Beta-grasp_dom_sf"/>
</dbReference>
<dbReference type="InterPro" id="IPR005107">
    <property type="entry name" value="CO_DH_flav_C"/>
</dbReference>
<dbReference type="InterPro" id="IPR036683">
    <property type="entry name" value="CO_DH_flav_C_dom_sf"/>
</dbReference>
<dbReference type="InterPro" id="IPR016166">
    <property type="entry name" value="FAD-bd_PCMH"/>
</dbReference>
<dbReference type="InterPro" id="IPR036318">
    <property type="entry name" value="FAD-bd_PCMH-like_sf"/>
</dbReference>
<dbReference type="InterPro" id="IPR016167">
    <property type="entry name" value="FAD-bd_PCMH_sub1"/>
</dbReference>
<dbReference type="InterPro" id="IPR016169">
    <property type="entry name" value="FAD-bd_PCMH_sub2"/>
</dbReference>
<dbReference type="InterPro" id="IPR002346">
    <property type="entry name" value="Mopterin_DH_FAD-bd"/>
</dbReference>
<dbReference type="InterPro" id="IPR022407">
    <property type="entry name" value="OxRdtase_Mopterin_BS"/>
</dbReference>
<dbReference type="InterPro" id="IPR014307">
    <property type="entry name" value="Xanthine_DH_ssu"/>
</dbReference>
<dbReference type="NCBIfam" id="TIGR02963">
    <property type="entry name" value="xanthine_xdhA"/>
    <property type="match status" value="1"/>
</dbReference>
<dbReference type="PANTHER" id="PTHR45444">
    <property type="entry name" value="XANTHINE DEHYDROGENASE"/>
    <property type="match status" value="1"/>
</dbReference>
<dbReference type="PANTHER" id="PTHR45444:SF3">
    <property type="entry name" value="XANTHINE DEHYDROGENASE"/>
    <property type="match status" value="1"/>
</dbReference>
<dbReference type="Pfam" id="PF01315">
    <property type="entry name" value="Ald_Xan_dh_C"/>
    <property type="match status" value="1"/>
</dbReference>
<dbReference type="Pfam" id="PF03450">
    <property type="entry name" value="CO_deh_flav_C"/>
    <property type="match status" value="1"/>
</dbReference>
<dbReference type="Pfam" id="PF00941">
    <property type="entry name" value="FAD_binding_5"/>
    <property type="match status" value="1"/>
</dbReference>
<dbReference type="Pfam" id="PF00111">
    <property type="entry name" value="Fer2"/>
    <property type="match status" value="1"/>
</dbReference>
<dbReference type="Pfam" id="PF01799">
    <property type="entry name" value="Fer2_2"/>
    <property type="match status" value="1"/>
</dbReference>
<dbReference type="Pfam" id="PF02738">
    <property type="entry name" value="MoCoBD_1"/>
    <property type="match status" value="1"/>
</dbReference>
<dbReference type="Pfam" id="PF20256">
    <property type="entry name" value="MoCoBD_2"/>
    <property type="match status" value="1"/>
</dbReference>
<dbReference type="PIRSF" id="PIRSF000127">
    <property type="entry name" value="Xanthine_DH"/>
    <property type="match status" value="1"/>
</dbReference>
<dbReference type="SMART" id="SM01008">
    <property type="entry name" value="Ald_Xan_dh_C"/>
    <property type="match status" value="1"/>
</dbReference>
<dbReference type="SMART" id="SM01092">
    <property type="entry name" value="CO_deh_flav_C"/>
    <property type="match status" value="1"/>
</dbReference>
<dbReference type="SUPFAM" id="SSF54292">
    <property type="entry name" value="2Fe-2S ferredoxin-like"/>
    <property type="match status" value="1"/>
</dbReference>
<dbReference type="SUPFAM" id="SSF55447">
    <property type="entry name" value="CO dehydrogenase flavoprotein C-terminal domain-like"/>
    <property type="match status" value="1"/>
</dbReference>
<dbReference type="SUPFAM" id="SSF47741">
    <property type="entry name" value="CO dehydrogenase ISP C-domain like"/>
    <property type="match status" value="1"/>
</dbReference>
<dbReference type="SUPFAM" id="SSF54665">
    <property type="entry name" value="CO dehydrogenase molybdoprotein N-domain-like"/>
    <property type="match status" value="1"/>
</dbReference>
<dbReference type="SUPFAM" id="SSF56176">
    <property type="entry name" value="FAD-binding/transporter-associated domain-like"/>
    <property type="match status" value="1"/>
</dbReference>
<dbReference type="SUPFAM" id="SSF56003">
    <property type="entry name" value="Molybdenum cofactor-binding domain"/>
    <property type="match status" value="1"/>
</dbReference>
<dbReference type="PROSITE" id="PS00197">
    <property type="entry name" value="2FE2S_FER_1"/>
    <property type="match status" value="1"/>
</dbReference>
<dbReference type="PROSITE" id="PS51085">
    <property type="entry name" value="2FE2S_FER_2"/>
    <property type="match status" value="1"/>
</dbReference>
<dbReference type="PROSITE" id="PS51387">
    <property type="entry name" value="FAD_PCMH"/>
    <property type="match status" value="1"/>
</dbReference>
<dbReference type="PROSITE" id="PS00559">
    <property type="entry name" value="MOLYBDOPTERIN_EUK"/>
    <property type="match status" value="1"/>
</dbReference>
<feature type="chain" id="PRO_0000166086" description="Xanthine dehydrogenase/oxidase">
    <location>
        <begin position="1"/>
        <end position="1331"/>
    </location>
</feature>
<feature type="domain" description="2Fe-2S ferredoxin-type" evidence="2">
    <location>
        <begin position="4"/>
        <end position="91"/>
    </location>
</feature>
<feature type="domain" description="FAD-binding PCMH-type" evidence="3">
    <location>
        <begin position="228"/>
        <end position="413"/>
    </location>
</feature>
<feature type="active site" description="Proton acceptor">
    <location>
        <position position="1261"/>
    </location>
</feature>
<feature type="binding site" evidence="6 10">
    <location>
        <position position="43"/>
    </location>
    <ligand>
        <name>[2Fe-2S] cluster</name>
        <dbReference type="ChEBI" id="CHEBI:190135"/>
        <label>1</label>
    </ligand>
</feature>
<feature type="binding site" evidence="6 10">
    <location>
        <position position="48"/>
    </location>
    <ligand>
        <name>[2Fe-2S] cluster</name>
        <dbReference type="ChEBI" id="CHEBI:190135"/>
        <label>1</label>
    </ligand>
</feature>
<feature type="binding site" evidence="6 10">
    <location>
        <position position="51"/>
    </location>
    <ligand>
        <name>[2Fe-2S] cluster</name>
        <dbReference type="ChEBI" id="CHEBI:190135"/>
        <label>1</label>
    </ligand>
</feature>
<feature type="binding site" evidence="6 10">
    <location>
        <position position="73"/>
    </location>
    <ligand>
        <name>[2Fe-2S] cluster</name>
        <dbReference type="ChEBI" id="CHEBI:190135"/>
        <label>1</label>
    </ligand>
</feature>
<feature type="binding site" evidence="6 10">
    <location>
        <position position="112"/>
    </location>
    <ligand>
        <name>[2Fe-2S] cluster</name>
        <dbReference type="ChEBI" id="CHEBI:190135"/>
        <label>2</label>
    </ligand>
</feature>
<feature type="binding site" evidence="6 10">
    <location>
        <position position="115"/>
    </location>
    <ligand>
        <name>[2Fe-2S] cluster</name>
        <dbReference type="ChEBI" id="CHEBI:190135"/>
        <label>2</label>
    </ligand>
</feature>
<feature type="binding site" evidence="6 10">
    <location>
        <position position="147"/>
    </location>
    <ligand>
        <name>[2Fe-2S] cluster</name>
        <dbReference type="ChEBI" id="CHEBI:190135"/>
        <label>2</label>
    </ligand>
</feature>
<feature type="binding site" evidence="6 10">
    <location>
        <position position="149"/>
    </location>
    <ligand>
        <name>[2Fe-2S] cluster</name>
        <dbReference type="ChEBI" id="CHEBI:190135"/>
        <label>2</label>
    </ligand>
</feature>
<feature type="binding site" evidence="5 6">
    <location>
        <begin position="256"/>
        <end position="263"/>
    </location>
    <ligand>
        <name>FAD</name>
        <dbReference type="ChEBI" id="CHEBI:57692"/>
    </ligand>
</feature>
<feature type="binding site" evidence="1">
    <location>
        <position position="336"/>
    </location>
    <ligand>
        <name>FAD</name>
        <dbReference type="ChEBI" id="CHEBI:57692"/>
    </ligand>
</feature>
<feature type="binding site" evidence="5 6">
    <location>
        <begin position="346"/>
        <end position="350"/>
    </location>
    <ligand>
        <name>FAD</name>
        <dbReference type="ChEBI" id="CHEBI:57692"/>
    </ligand>
</feature>
<feature type="binding site" evidence="5 6">
    <location>
        <position position="359"/>
    </location>
    <ligand>
        <name>FAD</name>
        <dbReference type="ChEBI" id="CHEBI:57692"/>
    </ligand>
</feature>
<feature type="binding site" evidence="5 6">
    <location>
        <position position="403"/>
    </location>
    <ligand>
        <name>FAD</name>
        <dbReference type="ChEBI" id="CHEBI:57692"/>
    </ligand>
</feature>
<feature type="binding site" evidence="1">
    <location>
        <position position="421"/>
    </location>
    <ligand>
        <name>FAD</name>
        <dbReference type="ChEBI" id="CHEBI:57692"/>
    </ligand>
</feature>
<feature type="binding site" evidence="1">
    <location>
        <position position="767"/>
    </location>
    <ligand>
        <name>Mo-molybdopterin</name>
        <dbReference type="ChEBI" id="CHEBI:71302"/>
    </ligand>
    <ligandPart>
        <name>Mo</name>
        <dbReference type="ChEBI" id="CHEBI:28685"/>
    </ligandPart>
</feature>
<feature type="binding site" evidence="1">
    <location>
        <position position="798"/>
    </location>
    <ligand>
        <name>Mo-molybdopterin</name>
        <dbReference type="ChEBI" id="CHEBI:71302"/>
    </ligand>
    <ligandPart>
        <name>Mo</name>
        <dbReference type="ChEBI" id="CHEBI:28685"/>
    </ligandPart>
</feature>
<feature type="binding site">
    <location>
        <position position="802"/>
    </location>
    <ligand>
        <name>substrate</name>
    </ligand>
</feature>
<feature type="binding site">
    <location>
        <position position="880"/>
    </location>
    <ligand>
        <name>substrate</name>
    </ligand>
</feature>
<feature type="binding site" evidence="1">
    <location>
        <position position="912"/>
    </location>
    <ligand>
        <name>Mo-molybdopterin</name>
        <dbReference type="ChEBI" id="CHEBI:71302"/>
    </ligand>
    <ligandPart>
        <name>Mo</name>
        <dbReference type="ChEBI" id="CHEBI:28685"/>
    </ligandPart>
</feature>
<feature type="binding site" evidence="1">
    <location>
        <position position="914"/>
    </location>
    <ligand>
        <name>substrate</name>
    </ligand>
</feature>
<feature type="binding site">
    <location>
        <position position="1010"/>
    </location>
    <ligand>
        <name>substrate</name>
    </ligand>
</feature>
<feature type="binding site" evidence="1">
    <location>
        <position position="1079"/>
    </location>
    <ligand>
        <name>Mo-molybdopterin</name>
        <dbReference type="ChEBI" id="CHEBI:71302"/>
    </ligand>
    <ligandPart>
        <name>Mo</name>
        <dbReference type="ChEBI" id="CHEBI:28685"/>
    </ligandPart>
</feature>
<feature type="disulfide bond" description="In oxidase form" evidence="9">
    <location>
        <begin position="535"/>
        <end position="992"/>
    </location>
</feature>
<feature type="mutagenesis site" description="Converts the enzyme to the oxidase form that utilizes molecular oxygen as electron acceptor. Interferes with normal conversion to the dehydrogenase form by reducing agents." evidence="6">
    <original>WF</original>
    <variation>AL</variation>
    <location>
        <begin position="335"/>
        <end position="336"/>
    </location>
</feature>
<feature type="mutagenesis site" description="Slows the conversion from the dehydrogenase form to the oxidase form; when associated with R-992. Abolishes conversion from the dehydrogenase form to the oxidase form; when associated with R-992 and S-1316." evidence="5">
    <original>C</original>
    <variation>A</variation>
    <location>
        <position position="535"/>
    </location>
</feature>
<feature type="mutagenesis site" description="Slows the conversion from the dehydrogenase form to the oxidase form; when associated with A-535. Abolishes conversion from the dehydrogenase form to the oxidase form; when associated with A-535 and S-1316." evidence="5">
    <original>C</original>
    <variation>R</variation>
    <location>
        <position position="992"/>
    </location>
</feature>
<feature type="mutagenesis site" description="Abolishes conversion from the dehydrogenase form to the oxidase form; when associated with A-535 and R-992." evidence="5">
    <original>C</original>
    <variation>S</variation>
    <location>
        <position position="1316"/>
    </location>
</feature>
<feature type="strand" evidence="13">
    <location>
        <begin position="6"/>
        <end position="10"/>
    </location>
</feature>
<feature type="strand" evidence="13">
    <location>
        <begin position="13"/>
        <end position="17"/>
    </location>
</feature>
<feature type="helix" evidence="13">
    <location>
        <begin position="26"/>
        <end position="32"/>
    </location>
</feature>
<feature type="strand" evidence="13">
    <location>
        <begin position="44"/>
        <end position="48"/>
    </location>
</feature>
<feature type="strand" evidence="13">
    <location>
        <begin position="52"/>
        <end position="59"/>
    </location>
</feature>
<feature type="turn" evidence="13">
    <location>
        <begin position="60"/>
        <end position="63"/>
    </location>
</feature>
<feature type="strand" evidence="13">
    <location>
        <begin position="64"/>
        <end position="71"/>
    </location>
</feature>
<feature type="helix" evidence="13">
    <location>
        <begin position="72"/>
        <end position="74"/>
    </location>
</feature>
<feature type="helix" evidence="13">
    <location>
        <begin position="77"/>
        <end position="79"/>
    </location>
</feature>
<feature type="strand" evidence="13">
    <location>
        <begin position="84"/>
        <end position="86"/>
    </location>
</feature>
<feature type="helix" evidence="13">
    <location>
        <begin position="88"/>
        <end position="91"/>
    </location>
</feature>
<feature type="strand" evidence="11">
    <location>
        <begin position="94"/>
        <end position="96"/>
    </location>
</feature>
<feature type="helix" evidence="13">
    <location>
        <begin position="99"/>
        <end position="106"/>
    </location>
</feature>
<feature type="helix" evidence="13">
    <location>
        <begin position="116"/>
        <end position="129"/>
    </location>
</feature>
<feature type="helix" evidence="13">
    <location>
        <begin position="135"/>
        <end position="140"/>
    </location>
</feature>
<feature type="turn" evidence="13">
    <location>
        <begin position="141"/>
        <end position="144"/>
    </location>
</feature>
<feature type="strand" evidence="13">
    <location>
        <begin position="148"/>
        <end position="150"/>
    </location>
</feature>
<feature type="helix" evidence="13">
    <location>
        <begin position="153"/>
        <end position="159"/>
    </location>
</feature>
<feature type="helix" evidence="13">
    <location>
        <begin position="160"/>
        <end position="162"/>
    </location>
</feature>
<feature type="helix" evidence="13">
    <location>
        <begin position="197"/>
        <end position="199"/>
    </location>
</feature>
<feature type="helix" evidence="13">
    <location>
        <begin position="205"/>
        <end position="207"/>
    </location>
</feature>
<feature type="helix" evidence="13">
    <location>
        <begin position="213"/>
        <end position="218"/>
    </location>
</feature>
<feature type="strand" evidence="13">
    <location>
        <begin position="226"/>
        <end position="229"/>
    </location>
</feature>
<feature type="strand" evidence="13">
    <location>
        <begin position="234"/>
        <end position="237"/>
    </location>
</feature>
<feature type="helix" evidence="13">
    <location>
        <begin position="241"/>
        <end position="250"/>
    </location>
</feature>
<feature type="helix" evidence="13">
    <location>
        <begin position="263"/>
        <end position="269"/>
    </location>
</feature>
<feature type="strand" evidence="13">
    <location>
        <begin position="275"/>
        <end position="279"/>
    </location>
</feature>
<feature type="helix" evidence="13">
    <location>
        <begin position="284"/>
        <end position="287"/>
    </location>
</feature>
<feature type="strand" evidence="13">
    <location>
        <begin position="289"/>
        <end position="291"/>
    </location>
</feature>
<feature type="strand" evidence="13">
    <location>
        <begin position="293"/>
        <end position="299"/>
    </location>
</feature>
<feature type="helix" evidence="13">
    <location>
        <begin position="304"/>
        <end position="317"/>
    </location>
</feature>
<feature type="helix" evidence="13">
    <location>
        <begin position="320"/>
        <end position="322"/>
    </location>
</feature>
<feature type="helix" evidence="13">
    <location>
        <begin position="324"/>
        <end position="334"/>
    </location>
</feature>
<feature type="helix" evidence="13">
    <location>
        <begin position="339"/>
        <end position="342"/>
    </location>
</feature>
<feature type="helix" evidence="13">
    <location>
        <begin position="347"/>
        <end position="353"/>
    </location>
</feature>
<feature type="helix" evidence="13">
    <location>
        <begin position="361"/>
        <end position="366"/>
    </location>
</feature>
<feature type="strand" evidence="13">
    <location>
        <begin position="370"/>
        <end position="375"/>
    </location>
</feature>
<feature type="strand" evidence="13">
    <location>
        <begin position="378"/>
        <end position="383"/>
    </location>
</feature>
<feature type="helix" evidence="13">
    <location>
        <begin position="386"/>
        <end position="388"/>
    </location>
</feature>
<feature type="strand" evidence="13">
    <location>
        <begin position="402"/>
        <end position="409"/>
    </location>
</feature>
<feature type="strand" evidence="13">
    <location>
        <begin position="415"/>
        <end position="422"/>
    </location>
</feature>
<feature type="strand" evidence="13">
    <location>
        <begin position="424"/>
        <end position="428"/>
    </location>
</feature>
<feature type="strand" evidence="13">
    <location>
        <begin position="432"/>
        <end position="441"/>
    </location>
</feature>
<feature type="strand" evidence="13">
    <location>
        <begin position="445"/>
        <end position="461"/>
    </location>
</feature>
<feature type="turn" evidence="13">
    <location>
        <begin position="466"/>
        <end position="468"/>
    </location>
</feature>
<feature type="helix" evidence="13">
    <location>
        <begin position="470"/>
        <end position="472"/>
    </location>
</feature>
<feature type="strand" evidence="13">
    <location>
        <begin position="476"/>
        <end position="478"/>
    </location>
</feature>
<feature type="helix" evidence="13">
    <location>
        <begin position="479"/>
        <end position="492"/>
    </location>
</feature>
<feature type="helix" evidence="13">
    <location>
        <begin position="504"/>
        <end position="528"/>
    </location>
</feature>
<feature type="turn" evidence="15">
    <location>
        <begin position="529"/>
        <end position="531"/>
    </location>
</feature>
<feature type="helix" evidence="13">
    <location>
        <begin position="532"/>
        <end position="535"/>
    </location>
</feature>
<feature type="helix" evidence="13">
    <location>
        <begin position="540"/>
        <end position="546"/>
    </location>
</feature>
<feature type="strand" evidence="13">
    <location>
        <begin position="555"/>
        <end position="559"/>
    </location>
</feature>
<feature type="strand" evidence="11">
    <location>
        <begin position="565"/>
        <end position="567"/>
    </location>
</feature>
<feature type="helix" evidence="13">
    <location>
        <begin position="582"/>
        <end position="586"/>
    </location>
</feature>
<feature type="helix" evidence="13">
    <location>
        <begin position="593"/>
        <end position="595"/>
    </location>
</feature>
<feature type="strand" evidence="13">
    <location>
        <begin position="603"/>
        <end position="609"/>
    </location>
</feature>
<feature type="strand" evidence="13">
    <location>
        <begin position="611"/>
        <end position="621"/>
    </location>
</feature>
<feature type="helix" evidence="13">
    <location>
        <begin position="625"/>
        <end position="627"/>
    </location>
</feature>
<feature type="strand" evidence="13">
    <location>
        <begin position="631"/>
        <end position="635"/>
    </location>
</feature>
<feature type="helix" evidence="13">
    <location>
        <begin position="637"/>
        <end position="639"/>
    </location>
</feature>
<feature type="strand" evidence="13">
    <location>
        <begin position="645"/>
        <end position="647"/>
    </location>
</feature>
<feature type="strand" evidence="13">
    <location>
        <begin position="652"/>
        <end position="655"/>
    </location>
</feature>
<feature type="strand" evidence="13">
    <location>
        <begin position="658"/>
        <end position="660"/>
    </location>
</feature>
<feature type="strand" evidence="13">
    <location>
        <begin position="666"/>
        <end position="674"/>
    </location>
</feature>
<feature type="helix" evidence="13">
    <location>
        <begin position="675"/>
        <end position="683"/>
    </location>
</feature>
<feature type="strand" evidence="13">
    <location>
        <begin position="686"/>
        <end position="691"/>
    </location>
</feature>
<feature type="helix" evidence="13">
    <location>
        <begin position="698"/>
        <end position="703"/>
    </location>
</feature>
<feature type="strand" evidence="13">
    <location>
        <begin position="707"/>
        <end position="710"/>
    </location>
</feature>
<feature type="strand" evidence="13">
    <location>
        <begin position="712"/>
        <end position="717"/>
    </location>
</feature>
<feature type="helix" evidence="13">
    <location>
        <begin position="719"/>
        <end position="725"/>
    </location>
</feature>
<feature type="strand" evidence="13">
    <location>
        <begin position="727"/>
        <end position="736"/>
    </location>
</feature>
<feature type="strand" evidence="13">
    <location>
        <begin position="748"/>
        <end position="753"/>
    </location>
</feature>
<feature type="strand" evidence="13">
    <location>
        <begin position="760"/>
        <end position="764"/>
    </location>
</feature>
<feature type="helix" evidence="13">
    <location>
        <begin position="769"/>
        <end position="780"/>
    </location>
</feature>
<feature type="helix" evidence="13">
    <location>
        <begin position="784"/>
        <end position="786"/>
    </location>
</feature>
<feature type="strand" evidence="13">
    <location>
        <begin position="787"/>
        <end position="792"/>
    </location>
</feature>
<feature type="turn" evidence="13">
    <location>
        <begin position="798"/>
        <end position="801"/>
    </location>
</feature>
<feature type="strand" evidence="11">
    <location>
        <begin position="802"/>
        <end position="804"/>
    </location>
</feature>
<feature type="helix" evidence="13">
    <location>
        <begin position="806"/>
        <end position="819"/>
    </location>
</feature>
<feature type="strand" evidence="13">
    <location>
        <begin position="823"/>
        <end position="826"/>
    </location>
</feature>
<feature type="helix" evidence="13">
    <location>
        <begin position="829"/>
        <end position="835"/>
    </location>
</feature>
<feature type="strand" evidence="13">
    <location>
        <begin position="842"/>
        <end position="850"/>
    </location>
</feature>
<feature type="strand" evidence="13">
    <location>
        <begin position="856"/>
        <end position="866"/>
    </location>
</feature>
<feature type="helix" evidence="13">
    <location>
        <begin position="874"/>
        <end position="883"/>
    </location>
</feature>
<feature type="turn" evidence="13">
    <location>
        <begin position="884"/>
        <end position="888"/>
    </location>
</feature>
<feature type="strand" evidence="13">
    <location>
        <begin position="892"/>
        <end position="901"/>
    </location>
</feature>
<feature type="turn" evidence="13">
    <location>
        <begin position="912"/>
        <end position="915"/>
    </location>
</feature>
<feature type="helix" evidence="13">
    <location>
        <begin position="916"/>
        <end position="934"/>
    </location>
</feature>
<feature type="helix" evidence="13">
    <location>
        <begin position="938"/>
        <end position="945"/>
    </location>
</feature>
<feature type="helix" evidence="13">
    <location>
        <begin position="964"/>
        <end position="974"/>
    </location>
</feature>
<feature type="helix" evidence="13">
    <location>
        <begin position="977"/>
        <end position="990"/>
    </location>
</feature>
<feature type="strand" evidence="13">
    <location>
        <begin position="992"/>
        <end position="1008"/>
    </location>
</feature>
<feature type="helix" evidence="13">
    <location>
        <begin position="1012"/>
        <end position="1014"/>
    </location>
</feature>
<feature type="strand" evidence="13">
    <location>
        <begin position="1016"/>
        <end position="1023"/>
    </location>
</feature>
<feature type="strand" evidence="13">
    <location>
        <begin position="1029"/>
        <end position="1034"/>
    </location>
</feature>
<feature type="strand" evidence="13">
    <location>
        <begin position="1038"/>
        <end position="1040"/>
    </location>
</feature>
<feature type="helix" evidence="13">
    <location>
        <begin position="1042"/>
        <end position="1054"/>
    </location>
</feature>
<feature type="helix" evidence="13">
    <location>
        <begin position="1058"/>
        <end position="1060"/>
    </location>
</feature>
<feature type="strand" evidence="14">
    <location>
        <begin position="1061"/>
        <end position="1063"/>
    </location>
</feature>
<feature type="turn" evidence="13">
    <location>
        <begin position="1068"/>
        <end position="1070"/>
    </location>
</feature>
<feature type="turn" evidence="11">
    <location>
        <begin position="1079"/>
        <end position="1081"/>
    </location>
</feature>
<feature type="helix" evidence="13">
    <location>
        <begin position="1082"/>
        <end position="1107"/>
    </location>
</feature>
<feature type="strand" evidence="13">
    <location>
        <begin position="1108"/>
        <end position="1111"/>
    </location>
</feature>
<feature type="helix" evidence="13">
    <location>
        <begin position="1113"/>
        <end position="1122"/>
    </location>
</feature>
<feature type="strand" evidence="13">
    <location>
        <begin position="1128"/>
        <end position="1134"/>
    </location>
</feature>
<feature type="turn" evidence="13">
    <location>
        <begin position="1142"/>
        <end position="1145"/>
    </location>
</feature>
<feature type="strand" evidence="13">
    <location>
        <begin position="1151"/>
        <end position="1165"/>
    </location>
</feature>
<feature type="turn" evidence="13">
    <location>
        <begin position="1166"/>
        <end position="1168"/>
    </location>
</feature>
<feature type="strand" evidence="13">
    <location>
        <begin position="1171"/>
        <end position="1181"/>
    </location>
</feature>
<feature type="helix" evidence="13">
    <location>
        <begin position="1188"/>
        <end position="1207"/>
    </location>
</feature>
<feature type="turn" evidence="13">
    <location>
        <begin position="1224"/>
        <end position="1226"/>
    </location>
</feature>
<feature type="helix" evidence="13">
    <location>
        <begin position="1232"/>
        <end position="1234"/>
    </location>
</feature>
<feature type="strand" evidence="13">
    <location>
        <begin position="1237"/>
        <end position="1243"/>
    </location>
</feature>
<feature type="turn" evidence="11">
    <location>
        <begin position="1250"/>
        <end position="1252"/>
    </location>
</feature>
<feature type="helix" evidence="13">
    <location>
        <begin position="1253"/>
        <end position="1255"/>
    </location>
</feature>
<feature type="helix" evidence="13">
    <location>
        <begin position="1264"/>
        <end position="1267"/>
    </location>
</feature>
<feature type="helix" evidence="13">
    <location>
        <begin position="1268"/>
        <end position="1285"/>
    </location>
</feature>
<feature type="strand" evidence="12">
    <location>
        <begin position="1286"/>
        <end position="1289"/>
    </location>
</feature>
<feature type="helix" evidence="13">
    <location>
        <begin position="1301"/>
        <end position="1307"/>
    </location>
</feature>
<feature type="helix" evidence="13">
    <location>
        <begin position="1311"/>
        <end position="1316"/>
    </location>
</feature>
<accession>P22985</accession>
<accession>Q63157</accession>
<protein>
    <recommendedName>
        <fullName>Xanthine dehydrogenase/oxidase</fullName>
    </recommendedName>
    <domain>
        <recommendedName>
            <fullName>Xanthine dehydrogenase</fullName>
            <shortName>XD</shortName>
            <ecNumber evidence="5 6">1.17.1.4</ecNumber>
        </recommendedName>
    </domain>
    <domain>
        <recommendedName>
            <fullName>Xanthine oxidase</fullName>
            <shortName>XO</shortName>
            <ecNumber evidence="5 6">1.17.3.2</ecNumber>
        </recommendedName>
        <alternativeName>
            <fullName>Xanthine oxidoreductase</fullName>
            <shortName>XOR</shortName>
        </alternativeName>
    </domain>
</protein>
<organism>
    <name type="scientific">Rattus norvegicus</name>
    <name type="common">Rat</name>
    <dbReference type="NCBI Taxonomy" id="10116"/>
    <lineage>
        <taxon>Eukaryota</taxon>
        <taxon>Metazoa</taxon>
        <taxon>Chordata</taxon>
        <taxon>Craniata</taxon>
        <taxon>Vertebrata</taxon>
        <taxon>Euteleostomi</taxon>
        <taxon>Mammalia</taxon>
        <taxon>Eutheria</taxon>
        <taxon>Euarchontoglires</taxon>
        <taxon>Glires</taxon>
        <taxon>Rodentia</taxon>
        <taxon>Myomorpha</taxon>
        <taxon>Muroidea</taxon>
        <taxon>Muridae</taxon>
        <taxon>Murinae</taxon>
        <taxon>Rattus</taxon>
    </lineage>
</organism>
<evidence type="ECO:0000250" key="1"/>
<evidence type="ECO:0000255" key="2">
    <source>
        <dbReference type="PROSITE-ProRule" id="PRU00465"/>
    </source>
</evidence>
<evidence type="ECO:0000255" key="3">
    <source>
        <dbReference type="PROSITE-ProRule" id="PRU00718"/>
    </source>
</evidence>
<evidence type="ECO:0000269" key="4">
    <source>
    </source>
</evidence>
<evidence type="ECO:0000269" key="5">
    <source>
    </source>
</evidence>
<evidence type="ECO:0000269" key="6">
    <source>
    </source>
</evidence>
<evidence type="ECO:0000269" key="7">
    <source>
    </source>
</evidence>
<evidence type="ECO:0000305" key="8"/>
<evidence type="ECO:0000305" key="9">
    <source>
    </source>
</evidence>
<evidence type="ECO:0007744" key="10">
    <source>
        <dbReference type="PDB" id="2E3T"/>
    </source>
</evidence>
<evidence type="ECO:0007829" key="11">
    <source>
        <dbReference type="PDB" id="1WYG"/>
    </source>
</evidence>
<evidence type="ECO:0007829" key="12">
    <source>
        <dbReference type="PDB" id="2E3T"/>
    </source>
</evidence>
<evidence type="ECO:0007829" key="13">
    <source>
        <dbReference type="PDB" id="3AN1"/>
    </source>
</evidence>
<evidence type="ECO:0007829" key="14">
    <source>
        <dbReference type="PDB" id="4YSW"/>
    </source>
</evidence>
<evidence type="ECO:0007829" key="15">
    <source>
        <dbReference type="PDB" id="4YTY"/>
    </source>
</evidence>
<sequence length="1331" mass="146243">MTADELVFFVNGKKVVEKNADPETTLLVYLRRKLGLCGTKLGCGEGGCGACTVMISKYDRLQNKIVHFSVNACLAPICSLHHVAVTTVEGIGNTQKLHPVQERIARSHGSQCGFCTPGIVMSMYTLLRNQPEPTVEEIENAFQGNLCRCTGYRPILQGFRTFAKDGGCCGGSGNNPNCCMNQTKDQTVSLSPSLFNPEDFKPLDPTQEPIFPPELLRLKDTPQKKLRFEGERVTWIQASTMEELLDLKAQHPDAKLVVGNTEIGIEMKFKNMLFPLIVCPAWIPELNSVVHGPEGISFGASCPLSLVESVLAEEIAKLPEQKTEVFRGVMEQLRWFAGKQVKSVASIGGNIITASPISDLNPVFMASGAKLTLVSRGTRRTVRMDHTFFPGYRKTLLRPEEILLSIEIPYSKEGEFFSAFKQASRREDDIAKVTSGMRVLFKPGTIEVQELSLCFGGMADRTISALKTTPKQLSKSWNEELLQSVCAGLAEELQLAPDAPGGMVEFRRTLTLSFFFKFYLTVLQKLGRADLEDMCGKLDPTFASATLLFQKDPPANVQLFQEVPKDQSEEDMVGRPLPHLAANMQASGEAVYCDDIPRYENELSLRLVTSTRAHAKITSIDTSEAKKVPGFVCFLTAEDVPNSNATGLFNDETVFAKDEVTCVGHIIGAVVADTPEHAQRAARGVKITYEDLPAIITIQDAINNNSFYGSEIKIEKGDLKKGFSEADNVVSGELYIGGQEHFYLETNCTIAVPKGEAGEMELFVSTQNTMKTQSFVAKMLGVPDNRIVVRVKRMGGGFGGKETRSTVVSTALALAAHKTGRPVRCMLDRDEDMLITGGRHPFLAKYKVGFMKTGTVVALEVAHFSNGGNTEDLSRSIMERALFHMDNAYKIPNIRGTGRICKTNLPSNTAFRGFGGPQGMLIAEYWMSEVAITCGLPAEEVRRKNMYKEGDLTHFNQKLEGFTLPRCWDECIASSQYLARKREVEKFNRENCWKKRGLCIIPTKFGISFTLPFLNQGGALVHVYTDGSVLLTHGGTEMGQGLHTKMVQVASRALKIPTSKIHISETSTNTVPNTSPTAASASADLNGQGVYEACQTILKRLEPFKKKKPTGPWEAWVMDAYTSAVSLSATGFYKTPNLGYSFETNSGNPFHYFSYGVACSEVEIDCLTGDHKNLRTDIVMDVGSSLNPAIDIGQVEGAFVQGLGLFTMEELHYSPEGSLHTRGPSTYKIPAFGSIPIEFRVSLLRDCPNKRAIYASKAVGEPPLFLASSIFFAIKDAIRAARAQHGDNAKQLFQLDSPATPEKIRNACVDQFTTLCVTGVPENCKSWSVRI</sequence>
<keyword id="KW-0001">2Fe-2S</keyword>
<keyword id="KW-0002">3D-structure</keyword>
<keyword id="KW-0963">Cytoplasm</keyword>
<keyword id="KW-0903">Direct protein sequencing</keyword>
<keyword id="KW-1015">Disulfide bond</keyword>
<keyword id="KW-0274">FAD</keyword>
<keyword id="KW-0285">Flavoprotein</keyword>
<keyword id="KW-0408">Iron</keyword>
<keyword id="KW-0411">Iron-sulfur</keyword>
<keyword id="KW-0479">Metal-binding</keyword>
<keyword id="KW-0500">Molybdenum</keyword>
<keyword id="KW-0520">NAD</keyword>
<keyword id="KW-0560">Oxidoreductase</keyword>
<keyword id="KW-0576">Peroxisome</keyword>
<keyword id="KW-1185">Reference proteome</keyword>
<keyword id="KW-0964">Secreted</keyword>
<reference key="1">
    <citation type="journal article" date="1990" name="J. Biol. Chem.">
        <title>Proteolytic conversion of xanthine dehydrogenase from the NAD-dependent type to the O2-dependent type. Amino acid sequence of rat liver xanthine dehydrogenase and identification of the cleavage sites of the enzyme protein during irreversible conversion by trypsin.</title>
        <authorList>
            <person name="Amaya Y."/>
            <person name="Yamazaki K."/>
            <person name="Sato M."/>
            <person name="Noda K."/>
            <person name="Nishino T."/>
            <person name="Nishino T."/>
        </authorList>
    </citation>
    <scope>NUCLEOTIDE SEQUENCE [MRNA]</scope>
    <scope>PARTIAL PROTEIN SEQUENCE</scope>
    <scope>ACTIVITY REGULATION</scope>
    <scope>PROTEOLYTIC CONVERSION</scope>
    <scope>SUBUNIT</scope>
    <source>
        <tissue>Liver</tissue>
    </source>
</reference>
<reference key="2">
    <citation type="journal article" date="1994" name="Nucleic Acids Res.">
        <title>Identification of the rat xanthine dehydrogenase/oxidase promoter.</title>
        <authorList>
            <person name="Chow C.W."/>
            <person name="Clark M."/>
            <person name="Rinaldo J."/>
            <person name="Chalkley R."/>
        </authorList>
    </citation>
    <scope>NUCLEOTIDE SEQUENCE OF 1-55</scope>
    <source>
        <strain>Sprague-Dawley</strain>
    </source>
</reference>
<reference key="3">
    <citation type="journal article" date="2002" name="Acta Histochem.">
        <title>Ultrastructural localization of xanthine oxidoreductase activity in isolated rat liver cells.</title>
        <authorList>
            <person name="Frederiks W.M."/>
            <person name="Vreeling-Sindelarova H."/>
        </authorList>
    </citation>
    <scope>SUBCELLULAR LOCATION</scope>
    <scope>TISSUE SPECIFICITY</scope>
</reference>
<reference key="4">
    <citation type="journal article" date="2005" name="J. Biol. Chem.">
        <title>Mechanism of the conversion of xanthine dehydrogenase to xanthine oxidase: identification of the two cysteine disulfide bonds and crystal structure of a non-convertible rat liver xanthine dehydrogenase mutant.</title>
        <authorList>
            <person name="Nishino T."/>
            <person name="Okamoto K."/>
            <person name="Kawaguchi Y."/>
            <person name="Hori H."/>
            <person name="Matsumura T."/>
            <person name="Eger B.T."/>
            <person name="Pai E.F."/>
            <person name="Nishino T."/>
        </authorList>
    </citation>
    <scope>X-RAY CRYSTALLOGRAPHY (2.6 ANGSTROMS) OF MUTANT ALA-535/ARG-992/SER-1324 IN COMPLEX WITH FAD; URIC ACID AND IRON-SULFUR CENTERS</scope>
    <scope>CATALYTIC ACTIVITY</scope>
    <scope>DISULFIDE BOND</scope>
    <scope>ACTIVITY REGULATION</scope>
    <scope>MUTAGENESIS OF CYS-535; CYS-992 AND CYS-1316</scope>
    <scope>COFACTOR</scope>
</reference>
<reference evidence="10" key="5">
    <citation type="journal article" date="2007" name="J. Biochem.">
        <title>Two mutations convert mammalian xanthine oxidoreductase to highly superoxide-productive xanthine oxidase.</title>
        <authorList>
            <person name="Asai R."/>
            <person name="Nishino T."/>
            <person name="Matsumura T."/>
            <person name="Okamoto K."/>
            <person name="Igarashi K."/>
            <person name="Pai E.F."/>
            <person name="Nishino T."/>
        </authorList>
    </citation>
    <scope>X-RAY CRYSTALLOGRAPHY (2.28 ANGSTROMS) OF MUTANT ALA-335/LEU-336 IN COMPLEX WITH FAD AND IRON-SULFUR (2FE-2S)</scope>
    <scope>MUTAGENESIS OF 335-TRP-PHE-336</scope>
    <scope>CATALYTIC ACTIVITY</scope>
    <scope>FUNCTION</scope>
    <scope>COFACTOR</scope>
</reference>
<proteinExistence type="evidence at protein level"/>